<gene>
    <name type="primary">FANCD2OS</name>
    <name type="synonym">C3orf24</name>
    <name type="ORF">HSD19</name>
</gene>
<protein>
    <recommendedName>
        <fullName>FANCD2 opposite strand protein</fullName>
    </recommendedName>
    <alternativeName>
        <fullName>Fanconi anemia group D2 protein opposite strand transcript protein</fullName>
    </alternativeName>
</protein>
<proteinExistence type="evidence at transcript level"/>
<accession>Q96PS1</accession>
<organism>
    <name type="scientific">Homo sapiens</name>
    <name type="common">Human</name>
    <dbReference type="NCBI Taxonomy" id="9606"/>
    <lineage>
        <taxon>Eukaryota</taxon>
        <taxon>Metazoa</taxon>
        <taxon>Chordata</taxon>
        <taxon>Craniata</taxon>
        <taxon>Vertebrata</taxon>
        <taxon>Euteleostomi</taxon>
        <taxon>Mammalia</taxon>
        <taxon>Eutheria</taxon>
        <taxon>Euarchontoglires</taxon>
        <taxon>Primates</taxon>
        <taxon>Haplorrhini</taxon>
        <taxon>Catarrhini</taxon>
        <taxon>Hominidae</taxon>
        <taxon>Homo</taxon>
    </lineage>
</organism>
<keyword id="KW-1185">Reference proteome</keyword>
<sequence>MAGYQLWSPWTPLDESFQWLRHTTPTPSSKHPFKASPCFPHTPSDLEVQLCFQEVTLVLDSPFLESGVSPKLPCHTSELRTMNNKGLVRKPQPIRLSGVDSVFGRVITAQPPKWTGTFRVSDKSAFCKIISREHQWPIGLKEPQIQMTVTMCKQMLRSILLLYATYKKCTFALQHSK</sequence>
<feature type="chain" id="PRO_0000235343" description="FANCD2 opposite strand protein">
    <location>
        <begin position="1"/>
        <end position="177"/>
    </location>
</feature>
<reference key="1">
    <citation type="submission" date="2000-02" db="EMBL/GenBank/DDBJ databases">
        <authorList>
            <person name="Timmers C.D."/>
            <person name="Hejna J.A."/>
            <person name="Reifsteck C."/>
            <person name="Lucas L.W."/>
            <person name="Bruun D.A."/>
            <person name="Thayer M.J."/>
            <person name="Taniguchi T."/>
            <person name="Olson S.B."/>
            <person name="D'Andrea A."/>
            <person name="Moses R.E."/>
            <person name="Grompe M."/>
        </authorList>
    </citation>
    <scope>NUCLEOTIDE SEQUENCE [MRNA]</scope>
</reference>
<reference key="2">
    <citation type="submission" date="2003-03" db="EMBL/GenBank/DDBJ databases">
        <title>A new spermatogenesis-related gene.</title>
        <authorList>
            <person name="Yang C.B."/>
            <person name="Miao S.Y."/>
            <person name="Zhang X.D."/>
            <person name="Qiao Y."/>
            <person name="Liang G."/>
            <person name="Wang L.F."/>
        </authorList>
    </citation>
    <scope>NUCLEOTIDE SEQUENCE [LARGE SCALE MRNA]</scope>
    <source>
        <tissue>Testis</tissue>
    </source>
</reference>
<reference key="3">
    <citation type="journal article" date="2006" name="Nature">
        <title>The DNA sequence, annotation and analysis of human chromosome 3.</title>
        <authorList>
            <person name="Muzny D.M."/>
            <person name="Scherer S.E."/>
            <person name="Kaul R."/>
            <person name="Wang J."/>
            <person name="Yu J."/>
            <person name="Sudbrak R."/>
            <person name="Buhay C.J."/>
            <person name="Chen R."/>
            <person name="Cree A."/>
            <person name="Ding Y."/>
            <person name="Dugan-Rocha S."/>
            <person name="Gill R."/>
            <person name="Gunaratne P."/>
            <person name="Harris R.A."/>
            <person name="Hawes A.C."/>
            <person name="Hernandez J."/>
            <person name="Hodgson A.V."/>
            <person name="Hume J."/>
            <person name="Jackson A."/>
            <person name="Khan Z.M."/>
            <person name="Kovar-Smith C."/>
            <person name="Lewis L.R."/>
            <person name="Lozado R.J."/>
            <person name="Metzker M.L."/>
            <person name="Milosavljevic A."/>
            <person name="Miner G.R."/>
            <person name="Morgan M.B."/>
            <person name="Nazareth L.V."/>
            <person name="Scott G."/>
            <person name="Sodergren E."/>
            <person name="Song X.-Z."/>
            <person name="Steffen D."/>
            <person name="Wei S."/>
            <person name="Wheeler D.A."/>
            <person name="Wright M.W."/>
            <person name="Worley K.C."/>
            <person name="Yuan Y."/>
            <person name="Zhang Z."/>
            <person name="Adams C.Q."/>
            <person name="Ansari-Lari M.A."/>
            <person name="Ayele M."/>
            <person name="Brown M.J."/>
            <person name="Chen G."/>
            <person name="Chen Z."/>
            <person name="Clendenning J."/>
            <person name="Clerc-Blankenburg K.P."/>
            <person name="Chen R."/>
            <person name="Chen Z."/>
            <person name="Davis C."/>
            <person name="Delgado O."/>
            <person name="Dinh H.H."/>
            <person name="Dong W."/>
            <person name="Draper H."/>
            <person name="Ernst S."/>
            <person name="Fu G."/>
            <person name="Gonzalez-Garay M.L."/>
            <person name="Garcia D.K."/>
            <person name="Gillett W."/>
            <person name="Gu J."/>
            <person name="Hao B."/>
            <person name="Haugen E."/>
            <person name="Havlak P."/>
            <person name="He X."/>
            <person name="Hennig S."/>
            <person name="Hu S."/>
            <person name="Huang W."/>
            <person name="Jackson L.R."/>
            <person name="Jacob L.S."/>
            <person name="Kelly S.H."/>
            <person name="Kube M."/>
            <person name="Levy R."/>
            <person name="Li Z."/>
            <person name="Liu B."/>
            <person name="Liu J."/>
            <person name="Liu W."/>
            <person name="Lu J."/>
            <person name="Maheshwari M."/>
            <person name="Nguyen B.-V."/>
            <person name="Okwuonu G.O."/>
            <person name="Palmeiri A."/>
            <person name="Pasternak S."/>
            <person name="Perez L.M."/>
            <person name="Phelps K.A."/>
            <person name="Plopper F.J."/>
            <person name="Qiang B."/>
            <person name="Raymond C."/>
            <person name="Rodriguez R."/>
            <person name="Saenphimmachak C."/>
            <person name="Santibanez J."/>
            <person name="Shen H."/>
            <person name="Shen Y."/>
            <person name="Subramanian S."/>
            <person name="Tabor P.E."/>
            <person name="Verduzco D."/>
            <person name="Waldron L."/>
            <person name="Wang J."/>
            <person name="Wang J."/>
            <person name="Wang Q."/>
            <person name="Williams G.A."/>
            <person name="Wong G.K.-S."/>
            <person name="Yao Z."/>
            <person name="Zhang J."/>
            <person name="Zhang X."/>
            <person name="Zhao G."/>
            <person name="Zhou J."/>
            <person name="Zhou Y."/>
            <person name="Nelson D."/>
            <person name="Lehrach H."/>
            <person name="Reinhardt R."/>
            <person name="Naylor S.L."/>
            <person name="Yang H."/>
            <person name="Olson M."/>
            <person name="Weinstock G."/>
            <person name="Gibbs R.A."/>
        </authorList>
    </citation>
    <scope>NUCLEOTIDE SEQUENCE [LARGE SCALE GENOMIC DNA]</scope>
</reference>
<reference key="4">
    <citation type="journal article" date="2004" name="Genome Res.">
        <title>The status, quality, and expansion of the NIH full-length cDNA project: the Mammalian Gene Collection (MGC).</title>
        <authorList>
            <consortium name="The MGC Project Team"/>
        </authorList>
    </citation>
    <scope>NUCLEOTIDE SEQUENCE [LARGE SCALE MRNA]</scope>
    <source>
        <tissue>Brain</tissue>
    </source>
</reference>
<dbReference type="EMBL" id="AF230334">
    <property type="protein sequence ID" value="AAL05979.1"/>
    <property type="molecule type" value="mRNA"/>
</dbReference>
<dbReference type="EMBL" id="AY248899">
    <property type="protein sequence ID" value="AAP20050.1"/>
    <property type="molecule type" value="mRNA"/>
</dbReference>
<dbReference type="EMBL" id="AC034193">
    <property type="status" value="NOT_ANNOTATED_CDS"/>
    <property type="molecule type" value="Genomic_DNA"/>
</dbReference>
<dbReference type="EMBL" id="BC028122">
    <property type="protein sequence ID" value="AAH28122.1"/>
    <property type="molecule type" value="mRNA"/>
</dbReference>
<dbReference type="CCDS" id="CCDS2596.1"/>
<dbReference type="RefSeq" id="NP_001158311.1">
    <property type="nucleotide sequence ID" value="NM_001164839.2"/>
</dbReference>
<dbReference type="RefSeq" id="NP_775743.1">
    <property type="nucleotide sequence ID" value="NM_173472.2"/>
</dbReference>
<dbReference type="RefSeq" id="XP_011531633.1">
    <property type="nucleotide sequence ID" value="XM_011533331.2"/>
</dbReference>
<dbReference type="BioGRID" id="125455">
    <property type="interactions" value="26"/>
</dbReference>
<dbReference type="FunCoup" id="Q96PS1">
    <property type="interactions" value="1"/>
</dbReference>
<dbReference type="IntAct" id="Q96PS1">
    <property type="interactions" value="24"/>
</dbReference>
<dbReference type="STRING" id="9606.ENSP00000429608"/>
<dbReference type="GlyGen" id="Q96PS1">
    <property type="glycosylation" value="1 site"/>
</dbReference>
<dbReference type="iPTMnet" id="Q96PS1"/>
<dbReference type="PhosphoSitePlus" id="Q96PS1"/>
<dbReference type="BioMuta" id="FANCD2OS"/>
<dbReference type="MassIVE" id="Q96PS1"/>
<dbReference type="PaxDb" id="9606-ENSP00000429608"/>
<dbReference type="ProteomicsDB" id="77742"/>
<dbReference type="Antibodypedia" id="53127">
    <property type="antibodies" value="65 antibodies from 14 providers"/>
</dbReference>
<dbReference type="DNASU" id="115795"/>
<dbReference type="Ensembl" id="ENST00000450660.3">
    <property type="protein sequence ID" value="ENSP00000429608.1"/>
    <property type="gene ID" value="ENSG00000163705.13"/>
</dbReference>
<dbReference type="Ensembl" id="ENST00000524279.1">
    <property type="protein sequence ID" value="ENSP00000429663.1"/>
    <property type="gene ID" value="ENSG00000163705.13"/>
</dbReference>
<dbReference type="GeneID" id="115795"/>
<dbReference type="KEGG" id="hsa:115795"/>
<dbReference type="MANE-Select" id="ENST00000450660.3">
    <property type="protein sequence ID" value="ENSP00000429608.1"/>
    <property type="RefSeq nucleotide sequence ID" value="NM_001164839.2"/>
    <property type="RefSeq protein sequence ID" value="NP_001158311.1"/>
</dbReference>
<dbReference type="UCSC" id="uc003buz.3">
    <property type="organism name" value="human"/>
</dbReference>
<dbReference type="AGR" id="HGNC:28623"/>
<dbReference type="CTD" id="115795"/>
<dbReference type="DisGeNET" id="115795"/>
<dbReference type="GeneCards" id="FANCD2OS"/>
<dbReference type="HGNC" id="HGNC:28623">
    <property type="gene designation" value="FANCD2OS"/>
</dbReference>
<dbReference type="HPA" id="ENSG00000163705">
    <property type="expression patterns" value="Tissue enriched (testis)"/>
</dbReference>
<dbReference type="MalaCards" id="FANCD2OS"/>
<dbReference type="MIM" id="621082">
    <property type="type" value="gene"/>
</dbReference>
<dbReference type="neXtProt" id="NX_Q96PS1"/>
<dbReference type="OpenTargets" id="ENSG00000163705"/>
<dbReference type="PharmGKB" id="PA142672385"/>
<dbReference type="VEuPathDB" id="HostDB:ENSG00000163705"/>
<dbReference type="eggNOG" id="ENOG502S0QV">
    <property type="taxonomic scope" value="Eukaryota"/>
</dbReference>
<dbReference type="GeneTree" id="ENSGT00390000000631"/>
<dbReference type="HOGENOM" id="CLU_1510145_0_0_1"/>
<dbReference type="InParanoid" id="Q96PS1"/>
<dbReference type="OMA" id="QPPHWTG"/>
<dbReference type="OrthoDB" id="9433753at2759"/>
<dbReference type="PAN-GO" id="Q96PS1">
    <property type="GO annotations" value="0 GO annotations based on evolutionary models"/>
</dbReference>
<dbReference type="PhylomeDB" id="Q96PS1"/>
<dbReference type="TreeFam" id="TF337186"/>
<dbReference type="PathwayCommons" id="Q96PS1"/>
<dbReference type="SignaLink" id="Q96PS1"/>
<dbReference type="BioGRID-ORCS" id="115795">
    <property type="hits" value="9 hits in 1136 CRISPR screens"/>
</dbReference>
<dbReference type="ChiTaRS" id="FANCD2OS">
    <property type="organism name" value="human"/>
</dbReference>
<dbReference type="GenomeRNAi" id="115795"/>
<dbReference type="Pharos" id="Q96PS1">
    <property type="development level" value="Tdark"/>
</dbReference>
<dbReference type="PRO" id="PR:Q96PS1"/>
<dbReference type="Proteomes" id="UP000005640">
    <property type="component" value="Chromosome 3"/>
</dbReference>
<dbReference type="RNAct" id="Q96PS1">
    <property type="molecule type" value="protein"/>
</dbReference>
<dbReference type="Bgee" id="ENSG00000163705">
    <property type="expression patterns" value="Expressed in left testis and 100 other cell types or tissues"/>
</dbReference>
<dbReference type="ExpressionAtlas" id="Q96PS1">
    <property type="expression patterns" value="baseline and differential"/>
</dbReference>
<dbReference type="InterPro" id="IPR027966">
    <property type="entry name" value="FANCD2OS"/>
</dbReference>
<dbReference type="PANTHER" id="PTHR31036">
    <property type="entry name" value="FANCD2 OPPOSITE STRAND PROTEIN"/>
    <property type="match status" value="1"/>
</dbReference>
<dbReference type="PANTHER" id="PTHR31036:SF0">
    <property type="entry name" value="FANCD2 OPPOSITE STRAND PROTEIN"/>
    <property type="match status" value="1"/>
</dbReference>
<dbReference type="Pfam" id="PF15124">
    <property type="entry name" value="FANCD2OS"/>
    <property type="match status" value="1"/>
</dbReference>
<name>FACOS_HUMAN</name>